<sequence>MADAEDIQPLVCDNGTG</sequence>
<keyword id="KW-0067">ATP-binding</keyword>
<keyword id="KW-0963">Cytoplasm</keyword>
<keyword id="KW-0206">Cytoskeleton</keyword>
<keyword id="KW-0547">Nucleotide-binding</keyword>
<keyword id="KW-1185">Reference proteome</keyword>
<comment type="function">
    <text>Actins are highly conserved proteins that are involved in various types of cell motility and are ubiquitously expressed in all eukaryotic cells.</text>
</comment>
<comment type="function">
    <text>Essential component of cell cytoskeleton; plays an important role in cytoplasmic streaming, cell shape determination, cell division, organelle movement and extension growth.</text>
</comment>
<comment type="subcellular location">
    <subcellularLocation>
        <location>Cytoplasm</location>
        <location>Cytoskeleton</location>
    </subcellularLocation>
</comment>
<comment type="miscellaneous">
    <text>There are at least 16 actin genes in soybean.</text>
</comment>
<comment type="similarity">
    <text evidence="1">Belongs to the actin family.</text>
</comment>
<organism>
    <name type="scientific">Glycine max</name>
    <name type="common">Soybean</name>
    <name type="synonym">Glycine hispida</name>
    <dbReference type="NCBI Taxonomy" id="3847"/>
    <lineage>
        <taxon>Eukaryota</taxon>
        <taxon>Viridiplantae</taxon>
        <taxon>Streptophyta</taxon>
        <taxon>Embryophyta</taxon>
        <taxon>Tracheophyta</taxon>
        <taxon>Spermatophyta</taxon>
        <taxon>Magnoliopsida</taxon>
        <taxon>eudicotyledons</taxon>
        <taxon>Gunneridae</taxon>
        <taxon>Pentapetalae</taxon>
        <taxon>rosids</taxon>
        <taxon>fabids</taxon>
        <taxon>Fabales</taxon>
        <taxon>Fabaceae</taxon>
        <taxon>Papilionoideae</taxon>
        <taxon>50 kb inversion clade</taxon>
        <taxon>NPAAA clade</taxon>
        <taxon>indigoferoid/millettioid clade</taxon>
        <taxon>Phaseoleae</taxon>
        <taxon>Glycine</taxon>
        <taxon>Glycine subgen. Soja</taxon>
    </lineage>
</organism>
<dbReference type="EMBL" id="X17119">
    <property type="protein sequence ID" value="CAA34979.1"/>
    <property type="molecule type" value="Genomic_DNA"/>
</dbReference>
<dbReference type="PIR" id="S15754">
    <property type="entry name" value="S15754"/>
</dbReference>
<dbReference type="STRING" id="3847.P15986"/>
<dbReference type="InParanoid" id="P15986"/>
<dbReference type="Proteomes" id="UP000008827">
    <property type="component" value="Unplaced"/>
</dbReference>
<dbReference type="GO" id="GO:0005737">
    <property type="term" value="C:cytoplasm"/>
    <property type="evidence" value="ECO:0007669"/>
    <property type="project" value="UniProtKB-KW"/>
</dbReference>
<dbReference type="GO" id="GO:0005856">
    <property type="term" value="C:cytoskeleton"/>
    <property type="evidence" value="ECO:0007669"/>
    <property type="project" value="UniProtKB-SubCell"/>
</dbReference>
<dbReference type="GO" id="GO:0005524">
    <property type="term" value="F:ATP binding"/>
    <property type="evidence" value="ECO:0007669"/>
    <property type="project" value="UniProtKB-KW"/>
</dbReference>
<accession>P15986</accession>
<proteinExistence type="inferred from homology"/>
<name>ACT6_SOYBN</name>
<gene>
    <name type="primary">SAC6</name>
</gene>
<evidence type="ECO:0000305" key="1"/>
<protein>
    <recommendedName>
        <fullName>Actin-6</fullName>
    </recommendedName>
</protein>
<reference key="1">
    <citation type="journal article" date="1990" name="Plant Mol. Biol.">
        <title>Diverse soybean actin transcripts contain a large intron in the 5' untranslated leader: structural similarity to vertebrate muscle actin genes.</title>
        <authorList>
            <person name="Pearson L."/>
            <person name="Meagher R.B."/>
        </authorList>
    </citation>
    <scope>NUCLEOTIDE SEQUENCE [GENOMIC DNA]</scope>
    <source>
        <strain>cv. Wayne</strain>
    </source>
</reference>
<feature type="chain" id="PRO_0000089024" description="Actin-6">
    <location>
        <begin position="1"/>
        <end position="17" status="greater than"/>
    </location>
</feature>
<feature type="non-terminal residue">
    <location>
        <position position="17"/>
    </location>
</feature>